<dbReference type="EMBL" id="EU342371">
    <property type="protein sequence ID" value="ABY26800.1"/>
    <property type="molecule type" value="Genomic_DNA"/>
</dbReference>
<dbReference type="EMBL" id="AP009568">
    <property type="protein sequence ID" value="BAH11218.1"/>
    <property type="molecule type" value="Genomic_DNA"/>
</dbReference>
<dbReference type="RefSeq" id="YP_001876587.1">
    <property type="nucleotide sequence ID" value="NC_010654.1"/>
</dbReference>
<dbReference type="GeneID" id="6276262"/>
<dbReference type="GO" id="GO:0009535">
    <property type="term" value="C:chloroplast thylakoid membrane"/>
    <property type="evidence" value="ECO:0007669"/>
    <property type="project" value="UniProtKB-SubCell"/>
</dbReference>
<dbReference type="GO" id="GO:0009522">
    <property type="term" value="C:photosystem I"/>
    <property type="evidence" value="ECO:0007669"/>
    <property type="project" value="InterPro"/>
</dbReference>
<dbReference type="GO" id="GO:0015979">
    <property type="term" value="P:photosynthesis"/>
    <property type="evidence" value="ECO:0007669"/>
    <property type="project" value="UniProtKB-UniRule"/>
</dbReference>
<dbReference type="HAMAP" id="MF_00437">
    <property type="entry name" value="Ycf4"/>
    <property type="match status" value="1"/>
</dbReference>
<dbReference type="InterPro" id="IPR003359">
    <property type="entry name" value="PSI_Ycf4_assembly"/>
</dbReference>
<dbReference type="PANTHER" id="PTHR33288">
    <property type="match status" value="1"/>
</dbReference>
<dbReference type="PANTHER" id="PTHR33288:SF4">
    <property type="entry name" value="PHOTOSYSTEM I ASSEMBLY PROTEIN YCF4"/>
    <property type="match status" value="1"/>
</dbReference>
<dbReference type="Pfam" id="PF02392">
    <property type="entry name" value="Ycf4"/>
    <property type="match status" value="1"/>
</dbReference>
<protein>
    <recommendedName>
        <fullName evidence="1">Photosystem I assembly protein Ycf4</fullName>
    </recommendedName>
</protein>
<organism>
    <name type="scientific">Welwitschia mirabilis</name>
    <name type="common">Tree tumbo</name>
    <name type="synonym">Welwitschia bainesii</name>
    <dbReference type="NCBI Taxonomy" id="3377"/>
    <lineage>
        <taxon>Eukaryota</taxon>
        <taxon>Viridiplantae</taxon>
        <taxon>Streptophyta</taxon>
        <taxon>Embryophyta</taxon>
        <taxon>Tracheophyta</taxon>
        <taxon>Spermatophyta</taxon>
        <taxon>Gnetopsida</taxon>
        <taxon>Gnetidae</taxon>
        <taxon>Welwitschiales</taxon>
        <taxon>Welwitschiaceae</taxon>
        <taxon>Welwitschia</taxon>
    </lineage>
</organism>
<evidence type="ECO:0000255" key="1">
    <source>
        <dbReference type="HAMAP-Rule" id="MF_00437"/>
    </source>
</evidence>
<accession>B2Y1X0</accession>
<keyword id="KW-0150">Chloroplast</keyword>
<keyword id="KW-0472">Membrane</keyword>
<keyword id="KW-0602">Photosynthesis</keyword>
<keyword id="KW-0934">Plastid</keyword>
<keyword id="KW-0793">Thylakoid</keyword>
<keyword id="KW-0812">Transmembrane</keyword>
<keyword id="KW-1133">Transmembrane helix</keyword>
<sequence length="185" mass="21293">MNNQSKRLWIEPIQGSRRKSNFFFASILFGGALGFFLVGFSSYLGRNLLPLLSSQQIIFVPQGIVMCFYGIAGLFFSSYLWCTIFFNVGSGYNQIDEKTGIVCLFRWGFPGRNRRIFLRFPLKNVHMIKMEVQENLFSSRHILYMKVKGLPDIPLARTGENLNLKEMEQKAAELARFLHVSIEGF</sequence>
<geneLocation type="chloroplast"/>
<comment type="function">
    <text evidence="1">Seems to be required for the assembly of the photosystem I complex.</text>
</comment>
<comment type="subcellular location">
    <subcellularLocation>
        <location evidence="1">Plastid</location>
        <location evidence="1">Chloroplast thylakoid membrane</location>
        <topology evidence="1">Multi-pass membrane protein</topology>
    </subcellularLocation>
</comment>
<comment type="similarity">
    <text evidence="1">Belongs to the Ycf4 family.</text>
</comment>
<feature type="chain" id="PRO_1000200331" description="Photosystem I assembly protein Ycf4">
    <location>
        <begin position="1"/>
        <end position="185"/>
    </location>
</feature>
<feature type="transmembrane region" description="Helical" evidence="1">
    <location>
        <begin position="22"/>
        <end position="42"/>
    </location>
</feature>
<feature type="transmembrane region" description="Helical" evidence="1">
    <location>
        <begin position="57"/>
        <end position="77"/>
    </location>
</feature>
<gene>
    <name evidence="1" type="primary">ycf4</name>
</gene>
<name>YCF4_WELMI</name>
<reference key="1">
    <citation type="journal article" date="2008" name="BMC Evol. Biol.">
        <title>The complete plastid genome sequence of Welwitschia mirabilis: an unusually compact plastome with accelerated divergence rates.</title>
        <authorList>
            <person name="McCoy S.R."/>
            <person name="Kuehl J.V."/>
            <person name="Boore J.L."/>
            <person name="Raubeson L.A."/>
        </authorList>
    </citation>
    <scope>NUCLEOTIDE SEQUENCE [LARGE SCALE GENOMIC DNA]</scope>
</reference>
<reference key="2">
    <citation type="journal article" date="2009" name="Mol. Phylogenet. Evol.">
        <title>Evolution of reduced and compact chloroplast genomes (cpDNAs) in gnetophytes: Selection toward a lower-cost strategy.</title>
        <authorList>
            <person name="Wu C.-S."/>
            <person name="Lai Y.-T."/>
            <person name="Lin C.-P."/>
            <person name="Wang Y.-N."/>
            <person name="Chaw S.-M."/>
        </authorList>
    </citation>
    <scope>NUCLEOTIDE SEQUENCE [LARGE SCALE GENOMIC DNA]</scope>
</reference>
<proteinExistence type="inferred from homology"/>